<keyword id="KW-0067">ATP-binding</keyword>
<keyword id="KW-0418">Kinase</keyword>
<keyword id="KW-0547">Nucleotide-binding</keyword>
<keyword id="KW-0597">Phosphoprotein</keyword>
<keyword id="KW-0808">Transferase</keyword>
<reference key="1">
    <citation type="submission" date="2006-08" db="EMBL/GenBank/DDBJ databases">
        <title>Complete sequence of Shewanella sp. MR-4.</title>
        <authorList>
            <consortium name="US DOE Joint Genome Institute"/>
            <person name="Copeland A."/>
            <person name="Lucas S."/>
            <person name="Lapidus A."/>
            <person name="Barry K."/>
            <person name="Detter J.C."/>
            <person name="Glavina del Rio T."/>
            <person name="Hammon N."/>
            <person name="Israni S."/>
            <person name="Dalin E."/>
            <person name="Tice H."/>
            <person name="Pitluck S."/>
            <person name="Kiss H."/>
            <person name="Brettin T."/>
            <person name="Bruce D."/>
            <person name="Han C."/>
            <person name="Tapia R."/>
            <person name="Gilna P."/>
            <person name="Schmutz J."/>
            <person name="Larimer F."/>
            <person name="Land M."/>
            <person name="Hauser L."/>
            <person name="Kyrpides N."/>
            <person name="Mikhailova N."/>
            <person name="Nealson K."/>
            <person name="Konstantinidis K."/>
            <person name="Klappenbach J."/>
            <person name="Tiedje J."/>
            <person name="Richardson P."/>
        </authorList>
    </citation>
    <scope>NUCLEOTIDE SEQUENCE [LARGE SCALE GENOMIC DNA]</scope>
    <source>
        <strain>MR-4</strain>
    </source>
</reference>
<name>CYSC_SHESM</name>
<feature type="chain" id="PRO_1000009028" description="Adenylyl-sulfate kinase">
    <location>
        <begin position="1"/>
        <end position="205"/>
    </location>
</feature>
<feature type="active site" description="Phosphoserine intermediate" evidence="1">
    <location>
        <position position="105"/>
    </location>
</feature>
<feature type="binding site" evidence="1">
    <location>
        <begin position="31"/>
        <end position="38"/>
    </location>
    <ligand>
        <name>ATP</name>
        <dbReference type="ChEBI" id="CHEBI:30616"/>
    </ligand>
</feature>
<gene>
    <name evidence="1" type="primary">cysC</name>
    <name type="ordered locus">Shewmr4_3069</name>
</gene>
<accession>Q0HFM7</accession>
<dbReference type="EC" id="2.7.1.25" evidence="1"/>
<dbReference type="EMBL" id="CP000446">
    <property type="protein sequence ID" value="ABI40140.1"/>
    <property type="molecule type" value="Genomic_DNA"/>
</dbReference>
<dbReference type="RefSeq" id="WP_011623813.1">
    <property type="nucleotide sequence ID" value="NC_008321.1"/>
</dbReference>
<dbReference type="SMR" id="Q0HFM7"/>
<dbReference type="KEGG" id="she:Shewmr4_3069"/>
<dbReference type="HOGENOM" id="CLU_046932_1_1_6"/>
<dbReference type="UniPathway" id="UPA00140">
    <property type="reaction ID" value="UER00205"/>
</dbReference>
<dbReference type="GO" id="GO:0004020">
    <property type="term" value="F:adenylylsulfate kinase activity"/>
    <property type="evidence" value="ECO:0007669"/>
    <property type="project" value="UniProtKB-UniRule"/>
</dbReference>
<dbReference type="GO" id="GO:0005524">
    <property type="term" value="F:ATP binding"/>
    <property type="evidence" value="ECO:0007669"/>
    <property type="project" value="UniProtKB-UniRule"/>
</dbReference>
<dbReference type="GO" id="GO:0070814">
    <property type="term" value="P:hydrogen sulfide biosynthetic process"/>
    <property type="evidence" value="ECO:0007669"/>
    <property type="project" value="UniProtKB-UniRule"/>
</dbReference>
<dbReference type="GO" id="GO:0000103">
    <property type="term" value="P:sulfate assimilation"/>
    <property type="evidence" value="ECO:0007669"/>
    <property type="project" value="UniProtKB-UniRule"/>
</dbReference>
<dbReference type="CDD" id="cd02027">
    <property type="entry name" value="APSK"/>
    <property type="match status" value="1"/>
</dbReference>
<dbReference type="FunFam" id="3.40.50.300:FF:000212">
    <property type="entry name" value="Adenylyl-sulfate kinase"/>
    <property type="match status" value="1"/>
</dbReference>
<dbReference type="Gene3D" id="3.40.50.300">
    <property type="entry name" value="P-loop containing nucleotide triphosphate hydrolases"/>
    <property type="match status" value="1"/>
</dbReference>
<dbReference type="HAMAP" id="MF_00065">
    <property type="entry name" value="Adenylyl_sulf_kinase"/>
    <property type="match status" value="1"/>
</dbReference>
<dbReference type="InterPro" id="IPR002891">
    <property type="entry name" value="APS_kinase"/>
</dbReference>
<dbReference type="InterPro" id="IPR027417">
    <property type="entry name" value="P-loop_NTPase"/>
</dbReference>
<dbReference type="NCBIfam" id="TIGR00455">
    <property type="entry name" value="apsK"/>
    <property type="match status" value="1"/>
</dbReference>
<dbReference type="NCBIfam" id="NF003013">
    <property type="entry name" value="PRK03846.1"/>
    <property type="match status" value="1"/>
</dbReference>
<dbReference type="PANTHER" id="PTHR11055:SF63">
    <property type="entry name" value="ADENYLYL-SULFATE KINASE 1, CHLOROPLASTIC"/>
    <property type="match status" value="1"/>
</dbReference>
<dbReference type="PANTHER" id="PTHR11055">
    <property type="entry name" value="BIFUNCTIONAL 3'-PHOSPHOADENOSINE 5'-PHOSPHOSULFATE SYNTHASE"/>
    <property type="match status" value="1"/>
</dbReference>
<dbReference type="Pfam" id="PF01583">
    <property type="entry name" value="APS_kinase"/>
    <property type="match status" value="1"/>
</dbReference>
<dbReference type="SUPFAM" id="SSF52540">
    <property type="entry name" value="P-loop containing nucleoside triphosphate hydrolases"/>
    <property type="match status" value="1"/>
</dbReference>
<protein>
    <recommendedName>
        <fullName evidence="1">Adenylyl-sulfate kinase</fullName>
        <ecNumber evidence="1">2.7.1.25</ecNumber>
    </recommendedName>
    <alternativeName>
        <fullName evidence="1">APS kinase</fullName>
    </alternativeName>
    <alternativeName>
        <fullName evidence="1">ATP adenosine-5'-phosphosulfate 3'-phosphotransferase</fullName>
    </alternativeName>
    <alternativeName>
        <fullName evidence="1">Adenosine-5'-phosphosulfate kinase</fullName>
    </alternativeName>
</protein>
<proteinExistence type="inferred from homology"/>
<organism>
    <name type="scientific">Shewanella sp. (strain MR-4)</name>
    <dbReference type="NCBI Taxonomy" id="60480"/>
    <lineage>
        <taxon>Bacteria</taxon>
        <taxon>Pseudomonadati</taxon>
        <taxon>Pseudomonadota</taxon>
        <taxon>Gammaproteobacteria</taxon>
        <taxon>Alteromonadales</taxon>
        <taxon>Shewanellaceae</taxon>
        <taxon>Shewanella</taxon>
    </lineage>
</organism>
<evidence type="ECO:0000255" key="1">
    <source>
        <dbReference type="HAMAP-Rule" id="MF_00065"/>
    </source>
</evidence>
<sequence length="205" mass="22323">MSNIVWHQHSVDQAARAKLKGQNPVLLWFTGLSGAGKSTLAGALERALFEAGFHTYLLDGDNVRHGLCKDLGFSVADRDENLRRVGEVAKLMVDAGLVVLSAFISPTREERDSIRARFPTGQFIEVHVSTPLSICEQRDPKGLYVKARRGEISNFTGISSPYEAPLSAELTIDTSKGDLASQVRALIDYLTAIEVINPSRLTASA</sequence>
<comment type="function">
    <text evidence="1">Catalyzes the synthesis of activated sulfate.</text>
</comment>
<comment type="catalytic activity">
    <reaction evidence="1">
        <text>adenosine 5'-phosphosulfate + ATP = 3'-phosphoadenylyl sulfate + ADP + H(+)</text>
        <dbReference type="Rhea" id="RHEA:24152"/>
        <dbReference type="ChEBI" id="CHEBI:15378"/>
        <dbReference type="ChEBI" id="CHEBI:30616"/>
        <dbReference type="ChEBI" id="CHEBI:58243"/>
        <dbReference type="ChEBI" id="CHEBI:58339"/>
        <dbReference type="ChEBI" id="CHEBI:456216"/>
        <dbReference type="EC" id="2.7.1.25"/>
    </reaction>
</comment>
<comment type="pathway">
    <text evidence="1">Sulfur metabolism; hydrogen sulfide biosynthesis; sulfite from sulfate: step 2/3.</text>
</comment>
<comment type="similarity">
    <text evidence="1">Belongs to the APS kinase family.</text>
</comment>